<comment type="function">
    <text evidence="1">Catalyzes the ATP-dependent phosphorylation of N-acetyl-L-glutamate.</text>
</comment>
<comment type="catalytic activity">
    <reaction evidence="1">
        <text>N-acetyl-L-glutamate + ATP = N-acetyl-L-glutamyl 5-phosphate + ADP</text>
        <dbReference type="Rhea" id="RHEA:14629"/>
        <dbReference type="ChEBI" id="CHEBI:30616"/>
        <dbReference type="ChEBI" id="CHEBI:44337"/>
        <dbReference type="ChEBI" id="CHEBI:57936"/>
        <dbReference type="ChEBI" id="CHEBI:456216"/>
        <dbReference type="EC" id="2.7.2.8"/>
    </reaction>
</comment>
<comment type="pathway">
    <text evidence="1">Amino-acid biosynthesis; L-arginine biosynthesis; N(2)-acetyl-L-ornithine from L-glutamate: step 2/4.</text>
</comment>
<comment type="subcellular location">
    <subcellularLocation>
        <location evidence="1">Cytoplasm</location>
    </subcellularLocation>
</comment>
<comment type="similarity">
    <text evidence="1">Belongs to the acetylglutamate kinase family. ArgB subfamily.</text>
</comment>
<evidence type="ECO:0000255" key="1">
    <source>
        <dbReference type="HAMAP-Rule" id="MF_00082"/>
    </source>
</evidence>
<feature type="chain" id="PRO_1000092852" description="Acetylglutamate kinase">
    <location>
        <begin position="1"/>
        <end position="299"/>
    </location>
</feature>
<feature type="binding site" evidence="1">
    <location>
        <begin position="72"/>
        <end position="73"/>
    </location>
    <ligand>
        <name>substrate</name>
    </ligand>
</feature>
<feature type="binding site" evidence="1">
    <location>
        <position position="94"/>
    </location>
    <ligand>
        <name>substrate</name>
    </ligand>
</feature>
<feature type="binding site" evidence="1">
    <location>
        <position position="196"/>
    </location>
    <ligand>
        <name>substrate</name>
    </ligand>
</feature>
<feature type="site" description="Transition state stabilizer" evidence="1">
    <location>
        <position position="37"/>
    </location>
</feature>
<feature type="site" description="Transition state stabilizer" evidence="1">
    <location>
        <position position="256"/>
    </location>
</feature>
<name>ARGB_PARP8</name>
<organism>
    <name type="scientific">Paraburkholderia phymatum (strain DSM 17167 / CIP 108236 / LMG 21445 / STM815)</name>
    <name type="common">Burkholderia phymatum</name>
    <dbReference type="NCBI Taxonomy" id="391038"/>
    <lineage>
        <taxon>Bacteria</taxon>
        <taxon>Pseudomonadati</taxon>
        <taxon>Pseudomonadota</taxon>
        <taxon>Betaproteobacteria</taxon>
        <taxon>Burkholderiales</taxon>
        <taxon>Burkholderiaceae</taxon>
        <taxon>Paraburkholderia</taxon>
    </lineage>
</organism>
<accession>B2JJX2</accession>
<gene>
    <name evidence="1" type="primary">argB</name>
    <name type="ordered locus">Bphy_0064</name>
</gene>
<reference key="1">
    <citation type="journal article" date="2014" name="Stand. Genomic Sci.">
        <title>Complete genome sequence of Burkholderia phymatum STM815(T), a broad host range and efficient nitrogen-fixing symbiont of Mimosa species.</title>
        <authorList>
            <person name="Moulin L."/>
            <person name="Klonowska A."/>
            <person name="Caroline B."/>
            <person name="Booth K."/>
            <person name="Vriezen J.A."/>
            <person name="Melkonian R."/>
            <person name="James E.K."/>
            <person name="Young J.P."/>
            <person name="Bena G."/>
            <person name="Hauser L."/>
            <person name="Land M."/>
            <person name="Kyrpides N."/>
            <person name="Bruce D."/>
            <person name="Chain P."/>
            <person name="Copeland A."/>
            <person name="Pitluck S."/>
            <person name="Woyke T."/>
            <person name="Lizotte-Waniewski M."/>
            <person name="Bristow J."/>
            <person name="Riley M."/>
        </authorList>
    </citation>
    <scope>NUCLEOTIDE SEQUENCE [LARGE SCALE GENOMIC DNA]</scope>
    <source>
        <strain>DSM 17167 / CIP 108236 / LMG 21445 / STM815</strain>
    </source>
</reference>
<protein>
    <recommendedName>
        <fullName evidence="1">Acetylglutamate kinase</fullName>
        <ecNumber evidence="1">2.7.2.8</ecNumber>
    </recommendedName>
    <alternativeName>
        <fullName evidence="1">N-acetyl-L-glutamate 5-phosphotransferase</fullName>
    </alternativeName>
    <alternativeName>
        <fullName evidence="1">NAG kinase</fullName>
        <shortName evidence="1">NAGK</shortName>
    </alternativeName>
</protein>
<proteinExistence type="inferred from homology"/>
<sequence>MSESPDLSQIAPTLKAEILAEALPYIRQYHGKTVVIKYGGNAMTEERLKQGFARDVILLKLVGINPVIVHGGGPQIDQALKKIGKQGTFIQGMRVTDEETMEVVEWVLGGEVQQDIVTLINHFGGHAVGLTGKDGGLIHARKLLMPDRDNPGQYIDIGQVGEVEAINPAVVKALQDDAFIPVISPIGFGEDGLSYNINADLVAGKLAVVLNAEKLVMMTNIPGVMDKEGTLLTDLSAREIDALFADGTISGGMLPKISSALDAAKSGVRSVHIIDGRIEHSVLLEILTEQPFGTMIRSH</sequence>
<keyword id="KW-0028">Amino-acid biosynthesis</keyword>
<keyword id="KW-0055">Arginine biosynthesis</keyword>
<keyword id="KW-0067">ATP-binding</keyword>
<keyword id="KW-0963">Cytoplasm</keyword>
<keyword id="KW-0418">Kinase</keyword>
<keyword id="KW-0547">Nucleotide-binding</keyword>
<keyword id="KW-1185">Reference proteome</keyword>
<keyword id="KW-0808">Transferase</keyword>
<dbReference type="EC" id="2.7.2.8" evidence="1"/>
<dbReference type="EMBL" id="CP001043">
    <property type="protein sequence ID" value="ACC69259.1"/>
    <property type="molecule type" value="Genomic_DNA"/>
</dbReference>
<dbReference type="RefSeq" id="WP_012399489.1">
    <property type="nucleotide sequence ID" value="NZ_CADFGH010000001.1"/>
</dbReference>
<dbReference type="SMR" id="B2JJX2"/>
<dbReference type="STRING" id="391038.Bphy_0064"/>
<dbReference type="GeneID" id="69967682"/>
<dbReference type="KEGG" id="bph:Bphy_0064"/>
<dbReference type="eggNOG" id="COG0548">
    <property type="taxonomic scope" value="Bacteria"/>
</dbReference>
<dbReference type="HOGENOM" id="CLU_053680_0_0_4"/>
<dbReference type="OrthoDB" id="9803155at2"/>
<dbReference type="UniPathway" id="UPA00068">
    <property type="reaction ID" value="UER00107"/>
</dbReference>
<dbReference type="Proteomes" id="UP000001192">
    <property type="component" value="Chromosome 1"/>
</dbReference>
<dbReference type="GO" id="GO:0005737">
    <property type="term" value="C:cytoplasm"/>
    <property type="evidence" value="ECO:0007669"/>
    <property type="project" value="UniProtKB-SubCell"/>
</dbReference>
<dbReference type="GO" id="GO:0003991">
    <property type="term" value="F:acetylglutamate kinase activity"/>
    <property type="evidence" value="ECO:0007669"/>
    <property type="project" value="UniProtKB-UniRule"/>
</dbReference>
<dbReference type="GO" id="GO:0005524">
    <property type="term" value="F:ATP binding"/>
    <property type="evidence" value="ECO:0007669"/>
    <property type="project" value="UniProtKB-UniRule"/>
</dbReference>
<dbReference type="GO" id="GO:0042450">
    <property type="term" value="P:arginine biosynthetic process via ornithine"/>
    <property type="evidence" value="ECO:0007669"/>
    <property type="project" value="UniProtKB-UniRule"/>
</dbReference>
<dbReference type="GO" id="GO:0006526">
    <property type="term" value="P:L-arginine biosynthetic process"/>
    <property type="evidence" value="ECO:0007669"/>
    <property type="project" value="UniProtKB-UniPathway"/>
</dbReference>
<dbReference type="CDD" id="cd04250">
    <property type="entry name" value="AAK_NAGK-C"/>
    <property type="match status" value="1"/>
</dbReference>
<dbReference type="FunFam" id="3.40.1160.10:FF:000004">
    <property type="entry name" value="Acetylglutamate kinase"/>
    <property type="match status" value="1"/>
</dbReference>
<dbReference type="Gene3D" id="3.40.1160.10">
    <property type="entry name" value="Acetylglutamate kinase-like"/>
    <property type="match status" value="1"/>
</dbReference>
<dbReference type="HAMAP" id="MF_00082">
    <property type="entry name" value="ArgB"/>
    <property type="match status" value="1"/>
</dbReference>
<dbReference type="InterPro" id="IPR036393">
    <property type="entry name" value="AceGlu_kinase-like_sf"/>
</dbReference>
<dbReference type="InterPro" id="IPR004662">
    <property type="entry name" value="AcgluKinase_fam"/>
</dbReference>
<dbReference type="InterPro" id="IPR037528">
    <property type="entry name" value="ArgB"/>
</dbReference>
<dbReference type="InterPro" id="IPR001048">
    <property type="entry name" value="Asp/Glu/Uridylate_kinase"/>
</dbReference>
<dbReference type="InterPro" id="IPR041727">
    <property type="entry name" value="NAGK-C"/>
</dbReference>
<dbReference type="NCBIfam" id="TIGR00761">
    <property type="entry name" value="argB"/>
    <property type="match status" value="1"/>
</dbReference>
<dbReference type="PANTHER" id="PTHR23342">
    <property type="entry name" value="N-ACETYLGLUTAMATE SYNTHASE"/>
    <property type="match status" value="1"/>
</dbReference>
<dbReference type="PANTHER" id="PTHR23342:SF0">
    <property type="entry name" value="N-ACETYLGLUTAMATE SYNTHASE, MITOCHONDRIAL"/>
    <property type="match status" value="1"/>
</dbReference>
<dbReference type="Pfam" id="PF00696">
    <property type="entry name" value="AA_kinase"/>
    <property type="match status" value="1"/>
</dbReference>
<dbReference type="PIRSF" id="PIRSF000728">
    <property type="entry name" value="NAGK"/>
    <property type="match status" value="1"/>
</dbReference>
<dbReference type="SUPFAM" id="SSF53633">
    <property type="entry name" value="Carbamate kinase-like"/>
    <property type="match status" value="1"/>
</dbReference>